<proteinExistence type="inferred from homology"/>
<feature type="chain" id="PRO_1000141237" description="Small ribosomal subunit protein uS13">
    <location>
        <begin position="1"/>
        <end position="125"/>
    </location>
</feature>
<feature type="region of interest" description="Disordered" evidence="2">
    <location>
        <begin position="92"/>
        <end position="125"/>
    </location>
</feature>
<sequence>MRLAGVNLPLNKHAVIALTYVYGIGNTSAKNILAKAGVAPDKKISELSDEEAHAIREIIGNEYTVEGEARAEQQLSIKRLMDIGCYRGLRHRRSLPARGQRTRTNARTRKGKRKTVAGKKKAGKK</sequence>
<dbReference type="EMBL" id="CP001099">
    <property type="protein sequence ID" value="ACF10628.1"/>
    <property type="molecule type" value="Genomic_DNA"/>
</dbReference>
<dbReference type="RefSeq" id="WP_012501462.1">
    <property type="nucleotide sequence ID" value="NC_011027.1"/>
</dbReference>
<dbReference type="SMR" id="B3QR95"/>
<dbReference type="STRING" id="517417.Cpar_0201"/>
<dbReference type="KEGG" id="cpc:Cpar_0201"/>
<dbReference type="eggNOG" id="COG0099">
    <property type="taxonomic scope" value="Bacteria"/>
</dbReference>
<dbReference type="HOGENOM" id="CLU_103849_1_2_10"/>
<dbReference type="OrthoDB" id="9803610at2"/>
<dbReference type="Proteomes" id="UP000008811">
    <property type="component" value="Chromosome"/>
</dbReference>
<dbReference type="GO" id="GO:0005829">
    <property type="term" value="C:cytosol"/>
    <property type="evidence" value="ECO:0007669"/>
    <property type="project" value="TreeGrafter"/>
</dbReference>
<dbReference type="GO" id="GO:0015935">
    <property type="term" value="C:small ribosomal subunit"/>
    <property type="evidence" value="ECO:0007669"/>
    <property type="project" value="TreeGrafter"/>
</dbReference>
<dbReference type="GO" id="GO:0019843">
    <property type="term" value="F:rRNA binding"/>
    <property type="evidence" value="ECO:0007669"/>
    <property type="project" value="UniProtKB-UniRule"/>
</dbReference>
<dbReference type="GO" id="GO:0003735">
    <property type="term" value="F:structural constituent of ribosome"/>
    <property type="evidence" value="ECO:0007669"/>
    <property type="project" value="InterPro"/>
</dbReference>
<dbReference type="GO" id="GO:0000049">
    <property type="term" value="F:tRNA binding"/>
    <property type="evidence" value="ECO:0007669"/>
    <property type="project" value="UniProtKB-UniRule"/>
</dbReference>
<dbReference type="GO" id="GO:0006412">
    <property type="term" value="P:translation"/>
    <property type="evidence" value="ECO:0007669"/>
    <property type="project" value="UniProtKB-UniRule"/>
</dbReference>
<dbReference type="FunFam" id="1.10.8.50:FF:000001">
    <property type="entry name" value="30S ribosomal protein S13"/>
    <property type="match status" value="1"/>
</dbReference>
<dbReference type="FunFam" id="4.10.910.10:FF:000001">
    <property type="entry name" value="30S ribosomal protein S13"/>
    <property type="match status" value="1"/>
</dbReference>
<dbReference type="Gene3D" id="1.10.8.50">
    <property type="match status" value="1"/>
</dbReference>
<dbReference type="Gene3D" id="4.10.910.10">
    <property type="entry name" value="30s ribosomal protein s13, domain 2"/>
    <property type="match status" value="1"/>
</dbReference>
<dbReference type="HAMAP" id="MF_01315">
    <property type="entry name" value="Ribosomal_uS13"/>
    <property type="match status" value="1"/>
</dbReference>
<dbReference type="InterPro" id="IPR027437">
    <property type="entry name" value="Rbsml_uS13_C"/>
</dbReference>
<dbReference type="InterPro" id="IPR001892">
    <property type="entry name" value="Ribosomal_uS13"/>
</dbReference>
<dbReference type="InterPro" id="IPR010979">
    <property type="entry name" value="Ribosomal_uS13-like_H2TH"/>
</dbReference>
<dbReference type="InterPro" id="IPR019980">
    <property type="entry name" value="Ribosomal_uS13_bac-type"/>
</dbReference>
<dbReference type="NCBIfam" id="TIGR03631">
    <property type="entry name" value="uS13_bact"/>
    <property type="match status" value="1"/>
</dbReference>
<dbReference type="PANTHER" id="PTHR10871">
    <property type="entry name" value="30S RIBOSOMAL PROTEIN S13/40S RIBOSOMAL PROTEIN S18"/>
    <property type="match status" value="1"/>
</dbReference>
<dbReference type="PANTHER" id="PTHR10871:SF1">
    <property type="entry name" value="SMALL RIBOSOMAL SUBUNIT PROTEIN US13M"/>
    <property type="match status" value="1"/>
</dbReference>
<dbReference type="Pfam" id="PF00416">
    <property type="entry name" value="Ribosomal_S13"/>
    <property type="match status" value="1"/>
</dbReference>
<dbReference type="PIRSF" id="PIRSF002134">
    <property type="entry name" value="Ribosomal_S13"/>
    <property type="match status" value="1"/>
</dbReference>
<dbReference type="SUPFAM" id="SSF46946">
    <property type="entry name" value="S13-like H2TH domain"/>
    <property type="match status" value="1"/>
</dbReference>
<dbReference type="PROSITE" id="PS50159">
    <property type="entry name" value="RIBOSOMAL_S13_2"/>
    <property type="match status" value="1"/>
</dbReference>
<comment type="function">
    <text evidence="1">Located at the top of the head of the 30S subunit, it contacts several helices of the 16S rRNA. In the 70S ribosome it contacts the 23S rRNA (bridge B1a) and protein L5 of the 50S subunit (bridge B1b), connecting the 2 subunits; these bridges are implicated in subunit movement. Contacts the tRNAs in the A and P-sites.</text>
</comment>
<comment type="subunit">
    <text evidence="1">Part of the 30S ribosomal subunit. Forms a loose heterodimer with protein S19. Forms two bridges to the 50S subunit in the 70S ribosome.</text>
</comment>
<comment type="similarity">
    <text evidence="1">Belongs to the universal ribosomal protein uS13 family.</text>
</comment>
<evidence type="ECO:0000255" key="1">
    <source>
        <dbReference type="HAMAP-Rule" id="MF_01315"/>
    </source>
</evidence>
<evidence type="ECO:0000256" key="2">
    <source>
        <dbReference type="SAM" id="MobiDB-lite"/>
    </source>
</evidence>
<evidence type="ECO:0000305" key="3"/>
<name>RS13_CHLP8</name>
<protein>
    <recommendedName>
        <fullName evidence="1">Small ribosomal subunit protein uS13</fullName>
    </recommendedName>
    <alternativeName>
        <fullName evidence="3">30S ribosomal protein S13</fullName>
    </alternativeName>
</protein>
<keyword id="KW-0687">Ribonucleoprotein</keyword>
<keyword id="KW-0689">Ribosomal protein</keyword>
<keyword id="KW-0694">RNA-binding</keyword>
<keyword id="KW-0699">rRNA-binding</keyword>
<keyword id="KW-0820">tRNA-binding</keyword>
<reference key="1">
    <citation type="submission" date="2008-06" db="EMBL/GenBank/DDBJ databases">
        <title>Complete sequence of Chlorobaculum parvum NCIB 8327.</title>
        <authorList>
            <consortium name="US DOE Joint Genome Institute"/>
            <person name="Lucas S."/>
            <person name="Copeland A."/>
            <person name="Lapidus A."/>
            <person name="Glavina del Rio T."/>
            <person name="Dalin E."/>
            <person name="Tice H."/>
            <person name="Bruce D."/>
            <person name="Goodwin L."/>
            <person name="Pitluck S."/>
            <person name="Schmutz J."/>
            <person name="Larimer F."/>
            <person name="Land M."/>
            <person name="Hauser L."/>
            <person name="Kyrpides N."/>
            <person name="Mikhailova N."/>
            <person name="Zhao F."/>
            <person name="Li T."/>
            <person name="Liu Z."/>
            <person name="Overmann J."/>
            <person name="Bryant D.A."/>
            <person name="Richardson P."/>
        </authorList>
    </citation>
    <scope>NUCLEOTIDE SEQUENCE [LARGE SCALE GENOMIC DNA]</scope>
    <source>
        <strain>DSM 263 / NCIMB 8327</strain>
    </source>
</reference>
<gene>
    <name evidence="1" type="primary">rpsM</name>
    <name type="ordered locus">Cpar_0201</name>
</gene>
<accession>B3QR95</accession>
<organism>
    <name type="scientific">Chlorobaculum parvum (strain DSM 263 / NCIMB 8327)</name>
    <name type="common">Chlorobium vibrioforme subsp. thiosulfatophilum</name>
    <dbReference type="NCBI Taxonomy" id="517417"/>
    <lineage>
        <taxon>Bacteria</taxon>
        <taxon>Pseudomonadati</taxon>
        <taxon>Chlorobiota</taxon>
        <taxon>Chlorobiia</taxon>
        <taxon>Chlorobiales</taxon>
        <taxon>Chlorobiaceae</taxon>
        <taxon>Chlorobaculum</taxon>
    </lineage>
</organism>